<accession>P0AFX3</accession>
<accession>P31221</accession>
<gene>
    <name type="primary">hpf</name>
    <name type="ordered locus">SF3243</name>
    <name type="ordered locus">S3461</name>
</gene>
<proteinExistence type="inferred from homology"/>
<organism>
    <name type="scientific">Shigella flexneri</name>
    <dbReference type="NCBI Taxonomy" id="623"/>
    <lineage>
        <taxon>Bacteria</taxon>
        <taxon>Pseudomonadati</taxon>
        <taxon>Pseudomonadota</taxon>
        <taxon>Gammaproteobacteria</taxon>
        <taxon>Enterobacterales</taxon>
        <taxon>Enterobacteriaceae</taxon>
        <taxon>Shigella</taxon>
    </lineage>
</organism>
<evidence type="ECO:0000250" key="1"/>
<evidence type="ECO:0000250" key="2">
    <source>
        <dbReference type="UniProtKB" id="P0AFX0"/>
    </source>
</evidence>
<evidence type="ECO:0000305" key="3"/>
<sequence>MQLNITGNNVEITEALREFVTAKFAKLEQYFDRINQVYVVLKVEKVTHTSDATLHVNGGEIHASAEGQDMYAAIDGLIDKLARQLTKHKDKLKQH</sequence>
<comment type="function">
    <text evidence="2">During stationary phase, promotes and stabilizes dimerization of 70S ribosomes by the ribosome modulation factor (RMF), leading to the formation of inactive 100S ribosomes.</text>
</comment>
<comment type="subunit">
    <text evidence="2">Associates exclusively with 100S ribosomes, which are dimers of 70S ribosomes.</text>
</comment>
<comment type="induction">
    <text evidence="1">Induced during stationary growth phase.</text>
</comment>
<comment type="similarity">
    <text evidence="3">Belongs to the HPF/YfiA ribosome-associated protein family. Short HPF subfamily.</text>
</comment>
<keyword id="KW-1185">Reference proteome</keyword>
<keyword id="KW-0810">Translation regulation</keyword>
<dbReference type="EMBL" id="AE005674">
    <property type="protein sequence ID" value="AAN44709.1"/>
    <property type="molecule type" value="Genomic_DNA"/>
</dbReference>
<dbReference type="EMBL" id="AE014073">
    <property type="protein sequence ID" value="AAP18523.1"/>
    <property type="molecule type" value="Genomic_DNA"/>
</dbReference>
<dbReference type="RefSeq" id="WP_001176599.1">
    <property type="nucleotide sequence ID" value="NZ_WPGW01000004.1"/>
</dbReference>
<dbReference type="BMRB" id="P0AFX3"/>
<dbReference type="SMR" id="P0AFX3"/>
<dbReference type="STRING" id="198214.SF3243"/>
<dbReference type="PaxDb" id="198214-SF3243"/>
<dbReference type="GeneID" id="93778778"/>
<dbReference type="KEGG" id="sfl:SF3243"/>
<dbReference type="KEGG" id="sfx:S3461"/>
<dbReference type="PATRIC" id="fig|198214.7.peg.3844"/>
<dbReference type="HOGENOM" id="CLU_071472_3_1_6"/>
<dbReference type="Proteomes" id="UP000001006">
    <property type="component" value="Chromosome"/>
</dbReference>
<dbReference type="Proteomes" id="UP000002673">
    <property type="component" value="Chromosome"/>
</dbReference>
<dbReference type="GO" id="GO:0022627">
    <property type="term" value="C:cytosolic small ribosomal subunit"/>
    <property type="evidence" value="ECO:0007669"/>
    <property type="project" value="TreeGrafter"/>
</dbReference>
<dbReference type="GO" id="GO:0043024">
    <property type="term" value="F:ribosomal small subunit binding"/>
    <property type="evidence" value="ECO:0007669"/>
    <property type="project" value="TreeGrafter"/>
</dbReference>
<dbReference type="GO" id="GO:0045900">
    <property type="term" value="P:negative regulation of translational elongation"/>
    <property type="evidence" value="ECO:0007669"/>
    <property type="project" value="TreeGrafter"/>
</dbReference>
<dbReference type="CDD" id="cd00552">
    <property type="entry name" value="RaiA"/>
    <property type="match status" value="1"/>
</dbReference>
<dbReference type="FunFam" id="3.30.160.100:FF:000001">
    <property type="entry name" value="Ribosome hibernation promoting factor"/>
    <property type="match status" value="1"/>
</dbReference>
<dbReference type="Gene3D" id="3.30.160.100">
    <property type="entry name" value="Ribosome hibernation promotion factor-like"/>
    <property type="match status" value="1"/>
</dbReference>
<dbReference type="InterPro" id="IPR050574">
    <property type="entry name" value="HPF/YfiA_ribosome-assoc"/>
</dbReference>
<dbReference type="InterPro" id="IPR036567">
    <property type="entry name" value="RHF-like"/>
</dbReference>
<dbReference type="InterPro" id="IPR003489">
    <property type="entry name" value="RHF/RaiA"/>
</dbReference>
<dbReference type="NCBIfam" id="NF007780">
    <property type="entry name" value="PRK10470.1"/>
    <property type="match status" value="1"/>
</dbReference>
<dbReference type="NCBIfam" id="TIGR00741">
    <property type="entry name" value="yfiA"/>
    <property type="match status" value="1"/>
</dbReference>
<dbReference type="PANTHER" id="PTHR33231">
    <property type="entry name" value="30S RIBOSOMAL PROTEIN"/>
    <property type="match status" value="1"/>
</dbReference>
<dbReference type="PANTHER" id="PTHR33231:SF1">
    <property type="entry name" value="30S RIBOSOMAL PROTEIN"/>
    <property type="match status" value="1"/>
</dbReference>
<dbReference type="Pfam" id="PF02482">
    <property type="entry name" value="Ribosomal_S30AE"/>
    <property type="match status" value="1"/>
</dbReference>
<dbReference type="SUPFAM" id="SSF69754">
    <property type="entry name" value="Ribosome binding protein Y (YfiA homologue)"/>
    <property type="match status" value="1"/>
</dbReference>
<protein>
    <recommendedName>
        <fullName>Ribosome hibernation promoting factor</fullName>
        <shortName>HPF</shortName>
    </recommendedName>
    <alternativeName>
        <fullName>Hibernation factor HPF</fullName>
    </alternativeName>
</protein>
<name>HPF_SHIFL</name>
<feature type="chain" id="PRO_0000097420" description="Ribosome hibernation promoting factor">
    <location>
        <begin position="1"/>
        <end position="95"/>
    </location>
</feature>
<reference key="1">
    <citation type="journal article" date="2002" name="Nucleic Acids Res.">
        <title>Genome sequence of Shigella flexneri 2a: insights into pathogenicity through comparison with genomes of Escherichia coli K12 and O157.</title>
        <authorList>
            <person name="Jin Q."/>
            <person name="Yuan Z."/>
            <person name="Xu J."/>
            <person name="Wang Y."/>
            <person name="Shen Y."/>
            <person name="Lu W."/>
            <person name="Wang J."/>
            <person name="Liu H."/>
            <person name="Yang J."/>
            <person name="Yang F."/>
            <person name="Zhang X."/>
            <person name="Zhang J."/>
            <person name="Yang G."/>
            <person name="Wu H."/>
            <person name="Qu D."/>
            <person name="Dong J."/>
            <person name="Sun L."/>
            <person name="Xue Y."/>
            <person name="Zhao A."/>
            <person name="Gao Y."/>
            <person name="Zhu J."/>
            <person name="Kan B."/>
            <person name="Ding K."/>
            <person name="Chen S."/>
            <person name="Cheng H."/>
            <person name="Yao Z."/>
            <person name="He B."/>
            <person name="Chen R."/>
            <person name="Ma D."/>
            <person name="Qiang B."/>
            <person name="Wen Y."/>
            <person name="Hou Y."/>
            <person name="Yu J."/>
        </authorList>
    </citation>
    <scope>NUCLEOTIDE SEQUENCE [LARGE SCALE GENOMIC DNA]</scope>
    <source>
        <strain>301 / Serotype 2a</strain>
    </source>
</reference>
<reference key="2">
    <citation type="journal article" date="2003" name="Infect. Immun.">
        <title>Complete genome sequence and comparative genomics of Shigella flexneri serotype 2a strain 2457T.</title>
        <authorList>
            <person name="Wei J."/>
            <person name="Goldberg M.B."/>
            <person name="Burland V."/>
            <person name="Venkatesan M.M."/>
            <person name="Deng W."/>
            <person name="Fournier G."/>
            <person name="Mayhew G.F."/>
            <person name="Plunkett G. III"/>
            <person name="Rose D.J."/>
            <person name="Darling A."/>
            <person name="Mau B."/>
            <person name="Perna N.T."/>
            <person name="Payne S.M."/>
            <person name="Runyen-Janecky L.J."/>
            <person name="Zhou S."/>
            <person name="Schwartz D.C."/>
            <person name="Blattner F.R."/>
        </authorList>
    </citation>
    <scope>NUCLEOTIDE SEQUENCE [LARGE SCALE GENOMIC DNA]</scope>
    <source>
        <strain>ATCC 700930 / 2457T / Serotype 2a</strain>
    </source>
</reference>